<keyword id="KW-0002">3D-structure</keyword>
<keyword id="KW-0007">Acetylation</keyword>
<keyword id="KW-0148">Chlorophyll</keyword>
<keyword id="KW-0150">Chloroplast</keyword>
<keyword id="KW-0157">Chromophore</keyword>
<keyword id="KW-0903">Direct protein sequencing</keyword>
<keyword id="KW-0464">Manganese</keyword>
<keyword id="KW-0472">Membrane</keyword>
<keyword id="KW-0479">Metal-binding</keyword>
<keyword id="KW-0597">Phosphoprotein</keyword>
<keyword id="KW-0602">Photosynthesis</keyword>
<keyword id="KW-0604">Photosystem II</keyword>
<keyword id="KW-0934">Plastid</keyword>
<keyword id="KW-1185">Reference proteome</keyword>
<keyword id="KW-0793">Thylakoid</keyword>
<keyword id="KW-0812">Transmembrane</keyword>
<keyword id="KW-1133">Transmembrane helix</keyword>
<dbReference type="EMBL" id="AP000423">
    <property type="protein sequence ID" value="BAA84381.2"/>
    <property type="status" value="ALT_SEQ"/>
    <property type="molecule type" value="Genomic_DNA"/>
</dbReference>
<dbReference type="RefSeq" id="NP_051055.1">
    <property type="nucleotide sequence ID" value="NC_000932.1"/>
</dbReference>
<dbReference type="PDB" id="5MDX">
    <property type="method" value="EM"/>
    <property type="resolution" value="5.30 A"/>
    <property type="chains" value="C/c=15-473"/>
</dbReference>
<dbReference type="PDB" id="7OUI">
    <property type="method" value="EM"/>
    <property type="resolution" value="2.79 A"/>
    <property type="chains" value="C/c=15-473"/>
</dbReference>
<dbReference type="PDBsum" id="5MDX"/>
<dbReference type="PDBsum" id="7OUI"/>
<dbReference type="EMDB" id="EMD-13078"/>
<dbReference type="EMDB" id="EMD-3491"/>
<dbReference type="SMR" id="P56778"/>
<dbReference type="BioGRID" id="29972">
    <property type="interactions" value="30"/>
</dbReference>
<dbReference type="FunCoup" id="P56778">
    <property type="interactions" value="342"/>
</dbReference>
<dbReference type="IntAct" id="P56778">
    <property type="interactions" value="2"/>
</dbReference>
<dbReference type="MINT" id="P56778"/>
<dbReference type="STRING" id="3702.P56778"/>
<dbReference type="TCDB" id="3.E.2.2.3">
    <property type="family name" value="the photosynthetic reaction center (prc) family"/>
</dbReference>
<dbReference type="iPTMnet" id="P56778"/>
<dbReference type="PaxDb" id="3702-ATCG00280.1"/>
<dbReference type="ProteomicsDB" id="226226"/>
<dbReference type="EnsemblPlants" id="ATCG00280.1">
    <property type="protein sequence ID" value="ATCG00280.1"/>
    <property type="gene ID" value="ATCG00280"/>
</dbReference>
<dbReference type="GeneID" id="844773"/>
<dbReference type="Gramene" id="ATCG00280.1">
    <property type="protein sequence ID" value="ATCG00280.1"/>
    <property type="gene ID" value="ATCG00280"/>
</dbReference>
<dbReference type="KEGG" id="ath:ArthCp018"/>
<dbReference type="Araport" id="ATCG00280"/>
<dbReference type="TAIR" id="ATCG00280">
    <property type="gene designation" value="PSBC"/>
</dbReference>
<dbReference type="eggNOG" id="ENOG502QR3X">
    <property type="taxonomic scope" value="Eukaryota"/>
</dbReference>
<dbReference type="HOGENOM" id="CLU_028310_1_1_1"/>
<dbReference type="InParanoid" id="P56778"/>
<dbReference type="OMA" id="FIWNGEA"/>
<dbReference type="BioCyc" id="MetaCyc:ATCG00280-MONOMER"/>
<dbReference type="PRO" id="PR:P56778"/>
<dbReference type="Proteomes" id="UP000006548">
    <property type="component" value="Chloroplast Pltd"/>
</dbReference>
<dbReference type="ExpressionAtlas" id="P56778">
    <property type="expression patterns" value="baseline and differential"/>
</dbReference>
<dbReference type="GO" id="GO:0009507">
    <property type="term" value="C:chloroplast"/>
    <property type="evidence" value="ECO:0007005"/>
    <property type="project" value="TAIR"/>
</dbReference>
<dbReference type="GO" id="GO:0009533">
    <property type="term" value="C:chloroplast stromal thylakoid"/>
    <property type="evidence" value="ECO:0000314"/>
    <property type="project" value="TAIR"/>
</dbReference>
<dbReference type="GO" id="GO:0009534">
    <property type="term" value="C:chloroplast thylakoid"/>
    <property type="evidence" value="ECO:0007005"/>
    <property type="project" value="TAIR"/>
</dbReference>
<dbReference type="GO" id="GO:0009535">
    <property type="term" value="C:chloroplast thylakoid membrane"/>
    <property type="evidence" value="ECO:0007005"/>
    <property type="project" value="TAIR"/>
</dbReference>
<dbReference type="GO" id="GO:0009539">
    <property type="term" value="C:photosystem II reaction center"/>
    <property type="evidence" value="ECO:0000304"/>
    <property type="project" value="TAIR"/>
</dbReference>
<dbReference type="GO" id="GO:0009536">
    <property type="term" value="C:plastid"/>
    <property type="evidence" value="ECO:0007005"/>
    <property type="project" value="TAIR"/>
</dbReference>
<dbReference type="GO" id="GO:0010287">
    <property type="term" value="C:plastoglobule"/>
    <property type="evidence" value="ECO:0007005"/>
    <property type="project" value="TAIR"/>
</dbReference>
<dbReference type="GO" id="GO:0009579">
    <property type="term" value="C:thylakoid"/>
    <property type="evidence" value="ECO:0007005"/>
    <property type="project" value="TAIR"/>
</dbReference>
<dbReference type="GO" id="GO:0016168">
    <property type="term" value="F:chlorophyll binding"/>
    <property type="evidence" value="ECO:0007669"/>
    <property type="project" value="UniProtKB-UniRule"/>
</dbReference>
<dbReference type="GO" id="GO:0045156">
    <property type="term" value="F:electron transporter, transferring electrons within the cyclic electron transport pathway of photosynthesis activity"/>
    <property type="evidence" value="ECO:0007669"/>
    <property type="project" value="InterPro"/>
</dbReference>
<dbReference type="GO" id="GO:0046872">
    <property type="term" value="F:metal ion binding"/>
    <property type="evidence" value="ECO:0007669"/>
    <property type="project" value="UniProtKB-KW"/>
</dbReference>
<dbReference type="GO" id="GO:0003729">
    <property type="term" value="F:mRNA binding"/>
    <property type="evidence" value="ECO:0000314"/>
    <property type="project" value="TAIR"/>
</dbReference>
<dbReference type="GO" id="GO:0009772">
    <property type="term" value="P:photosynthetic electron transport in photosystem II"/>
    <property type="evidence" value="ECO:0007669"/>
    <property type="project" value="InterPro"/>
</dbReference>
<dbReference type="FunFam" id="1.10.10.670:FF:000001">
    <property type="entry name" value="Photosystem II CP43 reaction center protein"/>
    <property type="match status" value="1"/>
</dbReference>
<dbReference type="Gene3D" id="1.10.10.670">
    <property type="entry name" value="photosystem ii from thermosynechococcus elongatus"/>
    <property type="match status" value="1"/>
</dbReference>
<dbReference type="HAMAP" id="MF_01496">
    <property type="entry name" value="PSII_PsbC_CP43"/>
    <property type="match status" value="1"/>
</dbReference>
<dbReference type="InterPro" id="IPR000932">
    <property type="entry name" value="PS_antenna-like"/>
</dbReference>
<dbReference type="InterPro" id="IPR036001">
    <property type="entry name" value="PS_II_antenna-like_sf"/>
</dbReference>
<dbReference type="InterPro" id="IPR005869">
    <property type="entry name" value="PSII_PsbC"/>
</dbReference>
<dbReference type="InterPro" id="IPR044900">
    <property type="entry name" value="PSII_PsbC_sf"/>
</dbReference>
<dbReference type="NCBIfam" id="TIGR01153">
    <property type="entry name" value="psbC"/>
    <property type="match status" value="1"/>
</dbReference>
<dbReference type="Pfam" id="PF00421">
    <property type="entry name" value="PSII"/>
    <property type="match status" value="1"/>
</dbReference>
<dbReference type="SUPFAM" id="SSF161077">
    <property type="entry name" value="Photosystem II antenna protein-like"/>
    <property type="match status" value="1"/>
</dbReference>
<proteinExistence type="evidence at protein level"/>
<protein>
    <recommendedName>
        <fullName evidence="1">Photosystem II CP43 reaction center protein</fullName>
    </recommendedName>
    <alternativeName>
        <fullName evidence="1">PSII 43 kDa protein</fullName>
    </alternativeName>
    <alternativeName>
        <fullName evidence="1">Protein CP-43</fullName>
    </alternativeName>
</protein>
<name>PSBC_ARATH</name>
<reference key="1">
    <citation type="journal article" date="1999" name="DNA Res.">
        <title>Complete structure of the chloroplast genome of Arabidopsis thaliana.</title>
        <authorList>
            <person name="Sato S."/>
            <person name="Nakamura Y."/>
            <person name="Kaneko T."/>
            <person name="Asamizu E."/>
            <person name="Tabata S."/>
        </authorList>
    </citation>
    <scope>NUCLEOTIDE SEQUENCE [LARGE SCALE GENOMIC DNA]</scope>
    <source>
        <strain>cv. Columbia</strain>
    </source>
</reference>
<reference key="2">
    <citation type="submission" date="2007-12" db="EMBL/GenBank/DDBJ databases">
        <authorList>
            <person name="Nakamura Y."/>
        </authorList>
    </citation>
    <scope>SEQUENCE REVISION TO N-TERMINUS</scope>
</reference>
<reference key="3">
    <citation type="journal article" date="2001" name="J. Biol. Chem.">
        <title>Mass spectrometric resolution of reversible protein phosphorylation in photosynthetic membranes of Arabidopsis thaliana.</title>
        <authorList>
            <person name="Vener A.V."/>
            <person name="Harms A."/>
            <person name="Sussman M.R."/>
            <person name="Vierstra R.D."/>
        </authorList>
    </citation>
    <scope>PROTEIN SEQUENCE OF 15-26</scope>
    <scope>SUBCELLULAR LOCATION</scope>
    <scope>DEAMIDATION AT ASN-18</scope>
    <scope>PHOSPHORYLATION AT THR-15</scope>
    <scope>ACETYLATION AT THR-15</scope>
    <source>
        <strain>cv. Columbia</strain>
    </source>
</reference>
<reference key="4">
    <citation type="journal article" date="2007" name="Plant Cell">
        <title>LPA2 is required for efficient assembly of photosystem II in Arabidopsis thaliana.</title>
        <authorList>
            <person name="Ma J."/>
            <person name="Peng L."/>
            <person name="Guo J."/>
            <person name="Lu Q."/>
            <person name="Lu C."/>
            <person name="Zhang L."/>
        </authorList>
    </citation>
    <scope>RETRACTED PAPER</scope>
</reference>
<reference key="5">
    <citation type="journal article" date="2016" name="Plant Cell">
        <authorList>
            <person name="Ma J."/>
            <person name="Peng L."/>
            <person name="Guo J."/>
            <person name="Lu Q."/>
            <person name="Lu C."/>
            <person name="Zhang L."/>
        </authorList>
    </citation>
    <scope>RETRACTION NOTICE OF PUBMED:17601825</scope>
</reference>
<reference key="6">
    <citation type="journal article" date="2009" name="J. Proteomics">
        <title>Phosphoproteomic analysis of nuclei-enriched fractions from Arabidopsis thaliana.</title>
        <authorList>
            <person name="Jones A.M.E."/>
            <person name="MacLean D."/>
            <person name="Studholme D.J."/>
            <person name="Serna-Sanz A."/>
            <person name="Andreasson E."/>
            <person name="Rathjen J.P."/>
            <person name="Peck S.C."/>
        </authorList>
    </citation>
    <scope>IDENTIFICATION BY MASS SPECTROMETRY [LARGE SCALE ANALYSIS]</scope>
    <source>
        <strain>cv. Columbia</strain>
    </source>
</reference>
<reference key="7">
    <citation type="journal article" date="2009" name="Plant Physiol.">
        <title>Large-scale Arabidopsis phosphoproteome profiling reveals novel chloroplast kinase substrates and phosphorylation networks.</title>
        <authorList>
            <person name="Reiland S."/>
            <person name="Messerli G."/>
            <person name="Baerenfaller K."/>
            <person name="Gerrits B."/>
            <person name="Endler A."/>
            <person name="Grossmann J."/>
            <person name="Gruissem W."/>
            <person name="Baginsky S."/>
        </authorList>
    </citation>
    <scope>PHOSPHORYLATION [LARGE SCALE ANALYSIS] AT THR-15</scope>
    <scope>IDENTIFICATION BY MASS SPECTROMETRY [LARGE SCALE ANALYSIS]</scope>
</reference>
<reference key="8">
    <citation type="journal article" date="2010" name="Plant Cell">
        <title>The Arabidopsis thylakoid protein PAM68 is required for efficient D1 biogenesis and photosystem II assembly.</title>
        <authorList>
            <person name="Armbruster U."/>
            <person name="Zuhlke J."/>
            <person name="Rengstl B."/>
            <person name="Kreller R."/>
            <person name="Makarenko E."/>
            <person name="Ruhle T."/>
            <person name="Schunemann D."/>
            <person name="Jahns P."/>
            <person name="Weisshaar B."/>
            <person name="Nickelsen J."/>
            <person name="Leister D."/>
        </authorList>
    </citation>
    <scope>INTERACTION WITH PAM68</scope>
    <scope>SUBUNIT</scope>
</reference>
<reference key="9">
    <citation type="journal article" date="2010" name="Plant Physiol.">
        <title>Cooperation of LPA3 and LPA2 is essential for photosystem II assembly in Arabidopsis.</title>
        <authorList>
            <person name="Cai W."/>
            <person name="Ma J."/>
            <person name="Chi W."/>
            <person name="Zou M."/>
            <person name="Guo J."/>
            <person name="Lu C."/>
            <person name="Zhang L."/>
        </authorList>
    </citation>
    <scope>RETRACTED PAPER</scope>
</reference>
<reference key="10">
    <citation type="journal article" date="2017" name="Plant Physiol.">
        <authorList>
            <person name="Cai W."/>
            <person name="Ma J."/>
            <person name="Chi W."/>
            <person name="Zou M."/>
            <person name="Guo J."/>
            <person name="Lu C."/>
            <person name="Zhang L."/>
        </authorList>
    </citation>
    <scope>RETRACTION NOTICE OF PUBMED:20605914</scope>
</reference>
<reference key="11">
    <citation type="journal article" date="2012" name="Mol. Cell. Proteomics">
        <title>Comparative large-scale characterisation of plant vs. mammal proteins reveals similar and idiosyncratic N-alpha acetylation features.</title>
        <authorList>
            <person name="Bienvenut W.V."/>
            <person name="Sumpton D."/>
            <person name="Martinez A."/>
            <person name="Lilla S."/>
            <person name="Espagne C."/>
            <person name="Meinnel T."/>
            <person name="Giglione C."/>
        </authorList>
    </citation>
    <scope>ACETYLATION [LARGE SCALE ANALYSIS] AT THR-15</scope>
    <scope>CLEAVAGE OF PROPEPTIDE [LARGE SCALE ANALYSIS] AFTER GLU-14</scope>
    <scope>IDENTIFICATION BY MASS SPECTROMETRY [LARGE SCALE ANALYSIS]</scope>
</reference>
<reference key="12">
    <citation type="journal article" date="2014" name="Plant Cell">
        <title>HYPERSENSITIVE TO HIGH LIGHT1 interacts with LOW QUANTUM YIELD OF PHOTOSYSTEM II1 and functions in protection of photosystem II from photodamage in Arabidopsis.</title>
        <authorList>
            <person name="Jin H."/>
            <person name="Liu B."/>
            <person name="Luo L."/>
            <person name="Feng D."/>
            <person name="Wang P."/>
            <person name="Liu J."/>
            <person name="Da Q."/>
            <person name="He Y."/>
            <person name="Qi K."/>
            <person name="Wang J."/>
            <person name="Wang H.B."/>
        </authorList>
    </citation>
    <scope>INTERACTION WITH HHL1</scope>
</reference>
<accession>P56778</accession>
<gene>
    <name evidence="1" type="primary">psbC</name>
    <name type="synonym">CP43</name>
    <name type="ordered locus">AtCg00280</name>
</gene>
<evidence type="ECO:0000255" key="1">
    <source>
        <dbReference type="HAMAP-Rule" id="MF_01496"/>
    </source>
</evidence>
<evidence type="ECO:0000269" key="2">
    <source>
    </source>
</evidence>
<evidence type="ECO:0000269" key="3">
    <source>
    </source>
</evidence>
<evidence type="ECO:0000269" key="4">
    <source>
    </source>
</evidence>
<evidence type="ECO:0000305" key="5"/>
<evidence type="ECO:0000305" key="6">
    <source>
    </source>
</evidence>
<evidence type="ECO:0000305" key="7">
    <source>
    </source>
</evidence>
<evidence type="ECO:0000305" key="8">
    <source>
    </source>
</evidence>
<evidence type="ECO:0000305" key="9">
    <source>
    </source>
</evidence>
<evidence type="ECO:0007744" key="10">
    <source>
    </source>
</evidence>
<evidence type="ECO:0007744" key="11">
    <source>
    </source>
</evidence>
<evidence type="ECO:0007829" key="12">
    <source>
        <dbReference type="PDB" id="7OUI"/>
    </source>
</evidence>
<feature type="propeptide" id="PRO_0000029428" evidence="1 2 11">
    <location>
        <begin position="1"/>
        <end position="14"/>
    </location>
</feature>
<feature type="chain" id="PRO_0000029429" description="Photosystem II CP43 reaction center protein" evidence="1">
    <location>
        <begin position="15"/>
        <end position="473"/>
    </location>
</feature>
<feature type="transmembrane region" description="Helical" evidence="1">
    <location>
        <begin position="69"/>
        <end position="93"/>
    </location>
</feature>
<feature type="transmembrane region" description="Helical" evidence="1">
    <location>
        <begin position="134"/>
        <end position="155"/>
    </location>
</feature>
<feature type="transmembrane region" description="Helical" evidence="1">
    <location>
        <begin position="178"/>
        <end position="200"/>
    </location>
</feature>
<feature type="transmembrane region" description="Helical" evidence="1">
    <location>
        <begin position="255"/>
        <end position="275"/>
    </location>
</feature>
<feature type="transmembrane region" description="Helical" evidence="1">
    <location>
        <begin position="291"/>
        <end position="312"/>
    </location>
</feature>
<feature type="transmembrane region" description="Helical" evidence="1">
    <location>
        <begin position="447"/>
        <end position="471"/>
    </location>
</feature>
<feature type="binding site" evidence="1">
    <location>
        <position position="367"/>
    </location>
    <ligand>
        <name>[CaMn4O5] cluster</name>
        <dbReference type="ChEBI" id="CHEBI:189552"/>
    </ligand>
</feature>
<feature type="modified residue" description="N-acetylthreonine" evidence="1 2 11">
    <location>
        <position position="15"/>
    </location>
</feature>
<feature type="modified residue" description="Phosphothreonine" evidence="1 2 10">
    <location>
        <position position="15"/>
    </location>
</feature>
<feature type="modified residue" description="Deamidated asparagine" evidence="2">
    <location>
        <position position="18"/>
    </location>
</feature>
<feature type="helix" evidence="12">
    <location>
        <begin position="28"/>
        <end position="31"/>
    </location>
</feature>
<feature type="helix" evidence="12">
    <location>
        <begin position="35"/>
        <end position="42"/>
    </location>
</feature>
<feature type="helix" evidence="12">
    <location>
        <begin position="46"/>
        <end position="73"/>
    </location>
</feature>
<feature type="helix" evidence="12">
    <location>
        <begin position="81"/>
        <end position="83"/>
    </location>
</feature>
<feature type="helix" evidence="12">
    <location>
        <begin position="89"/>
        <end position="94"/>
    </location>
</feature>
<feature type="helix" evidence="12">
    <location>
        <begin position="101"/>
        <end position="103"/>
    </location>
</feature>
<feature type="helix" evidence="12">
    <location>
        <begin position="109"/>
        <end position="134"/>
    </location>
</feature>
<feature type="turn" evidence="12">
    <location>
        <begin position="141"/>
        <end position="143"/>
    </location>
</feature>
<feature type="turn" evidence="12">
    <location>
        <begin position="145"/>
        <end position="147"/>
    </location>
</feature>
<feature type="helix" evidence="12">
    <location>
        <begin position="154"/>
        <end position="180"/>
    </location>
</feature>
<feature type="strand" evidence="12">
    <location>
        <begin position="185"/>
        <end position="187"/>
    </location>
</feature>
<feature type="turn" evidence="12">
    <location>
        <begin position="191"/>
        <end position="193"/>
    </location>
</feature>
<feature type="strand" evidence="12">
    <location>
        <begin position="195"/>
        <end position="197"/>
    </location>
</feature>
<feature type="helix" evidence="12">
    <location>
        <begin position="206"/>
        <end position="214"/>
    </location>
</feature>
<feature type="strand" evidence="12">
    <location>
        <begin position="217"/>
        <end position="219"/>
    </location>
</feature>
<feature type="helix" evidence="12">
    <location>
        <begin position="223"/>
        <end position="226"/>
    </location>
</feature>
<feature type="helix" evidence="12">
    <location>
        <begin position="230"/>
        <end position="253"/>
    </location>
</feature>
<feature type="helix" evidence="12">
    <location>
        <begin position="258"/>
        <end position="263"/>
    </location>
</feature>
<feature type="helix" evidence="12">
    <location>
        <begin position="268"/>
        <end position="292"/>
    </location>
</feature>
<feature type="strand" evidence="12">
    <location>
        <begin position="294"/>
        <end position="297"/>
    </location>
</feature>
<feature type="strand" evidence="12">
    <location>
        <begin position="299"/>
        <end position="302"/>
    </location>
</feature>
<feature type="helix" evidence="12">
    <location>
        <begin position="306"/>
        <end position="324"/>
    </location>
</feature>
<feature type="turn" evidence="12">
    <location>
        <begin position="328"/>
        <end position="330"/>
    </location>
</feature>
<feature type="strand" evidence="12">
    <location>
        <begin position="334"/>
        <end position="337"/>
    </location>
</feature>
<feature type="strand" evidence="12">
    <location>
        <begin position="339"/>
        <end position="343"/>
    </location>
</feature>
<feature type="strand" evidence="12">
    <location>
        <begin position="349"/>
        <end position="351"/>
    </location>
</feature>
<feature type="helix" evidence="12">
    <location>
        <begin position="354"/>
        <end position="358"/>
    </location>
</feature>
<feature type="turn" evidence="12">
    <location>
        <begin position="364"/>
        <end position="366"/>
    </location>
</feature>
<feature type="helix" evidence="12">
    <location>
        <begin position="367"/>
        <end position="369"/>
    </location>
</feature>
<feature type="helix" evidence="12">
    <location>
        <begin position="377"/>
        <end position="382"/>
    </location>
</feature>
<feature type="helix" evidence="12">
    <location>
        <begin position="386"/>
        <end position="396"/>
    </location>
</feature>
<feature type="helix" evidence="12">
    <location>
        <begin position="422"/>
        <end position="453"/>
    </location>
</feature>
<feature type="strand" evidence="12">
    <location>
        <begin position="461"/>
        <end position="463"/>
    </location>
</feature>
<feature type="helix" evidence="12">
    <location>
        <begin position="465"/>
        <end position="468"/>
    </location>
</feature>
<organism>
    <name type="scientific">Arabidopsis thaliana</name>
    <name type="common">Mouse-ear cress</name>
    <dbReference type="NCBI Taxonomy" id="3702"/>
    <lineage>
        <taxon>Eukaryota</taxon>
        <taxon>Viridiplantae</taxon>
        <taxon>Streptophyta</taxon>
        <taxon>Embryophyta</taxon>
        <taxon>Tracheophyta</taxon>
        <taxon>Spermatophyta</taxon>
        <taxon>Magnoliopsida</taxon>
        <taxon>eudicotyledons</taxon>
        <taxon>Gunneridae</taxon>
        <taxon>Pentapetalae</taxon>
        <taxon>rosids</taxon>
        <taxon>malvids</taxon>
        <taxon>Brassicales</taxon>
        <taxon>Brassicaceae</taxon>
        <taxon>Camelineae</taxon>
        <taxon>Arabidopsis</taxon>
    </lineage>
</organism>
<comment type="function">
    <text evidence="1">One of the components of the core complex of photosystem II (PSII). It binds chlorophyll and helps catalyze the primary light-induced photochemical processes of PSII. PSII is a light-driven water:plastoquinone oxidoreductase, using light energy to abstract electrons from H(2)O, generating O(2) and a proton gradient subsequently used for ATP formation.</text>
</comment>
<comment type="cofactor">
    <text evidence="1">Binds multiple chlorophylls and provides some of the ligands for the Ca-4Mn-5O cluster of the oxygen-evolving complex. It may also provide a ligand for a Cl- that is required for oxygen evolution. PSII binds additional chlorophylls, carotenoids and specific lipids.</text>
</comment>
<comment type="subunit">
    <text evidence="1 3 4">PSII is composed of 1 copy each of membrane proteins PsbA, PsbB, PsbC, PsbD, PsbE, PsbF, PsbH, PsbI, PsbJ, PsbK, PsbL, PsbM, PsbT, PsbX, PsbY, PsbZ, PsbC/Ycf12, at least 3 peripheral proteins of the oxygen-evolving complex and a large number of cofactors. It forms dimeric complexes (By similarity). Interacts with PAM68 (PubMed:20923938). Interacts with HHL1 (PubMed:24632535).</text>
</comment>
<comment type="subcellular location">
    <subcellularLocation>
        <location evidence="1 2">Plastid</location>
        <location evidence="1 2">Chloroplast thylakoid membrane</location>
        <topology evidence="1 5">Multi-pass membrane protein</topology>
    </subcellularLocation>
</comment>
<comment type="PTM">
    <text evidence="2">Phosphorylation occurs in normal plant growth light conditions. Rapid dephosphorylation occurs during heat shock.</text>
</comment>
<comment type="similarity">
    <text evidence="1">Belongs to the PsbB/PsbC family. PsbC subfamily.</text>
</comment>
<comment type="caution">
    <text evidence="6 7 8 9">An article reported an interaction with LPA2; however, this paper was later retracted. An article reported an interaction with LPA3; however, this paper was later retracted.</text>
</comment>
<comment type="sequence caution" evidence="5">
    <conflict type="erroneous gene model prediction">
        <sequence resource="EMBL-CDS" id="BAA84381"/>
    </conflict>
</comment>
<geneLocation type="chloroplast"/>
<sequence length="473" mass="51868">MKTLYSLRRFYHVETLFNGTLALAGRDQETTGFAWWAGNARLINLSGKLLGAHVAHAGLIVFWAGAMNLFEVAHFVPEKPMYEQGLILLPHLATLGWGVGPGGEVIDTFPYFVSGVLHLISSAVLGFGGIYHALLGPETLEESFPFFGYVWKDRNKMTTILGIHLILLGVGAFLLVFKALYFGGVYDTWAPGGGDVRKITNLTLSPSVIFGYLLKSPFGGEGWIVSVDDLEDIIGGHVWLGSICIFGGIWHILTKPFAWARRALVWSGEAYLSYSLAALSVCGFIACCFVWFNNTAYPSEFYGPTGPEASQAQAFTFLVRDQRLGANVGSAQGPTGLGKYLMRSPTGEVIFGGETMRFWDLRAPWLEPLRGPNGLDLSRLKKDIQPWQERRSAEYMTHAPLGSLNSVGGVATEINAVNYVSPRSWLSTSHFVLGFFLFVGHLWHAGRARAAAAGFEKGIDRDFEPVLSMTPLN</sequence>